<feature type="chain" id="PRO_1000201771" description="Dihydroxy-acid dehydratase">
    <location>
        <begin position="1"/>
        <end position="612"/>
    </location>
</feature>
<feature type="active site" description="Proton acceptor" evidence="1">
    <location>
        <position position="515"/>
    </location>
</feature>
<feature type="binding site" evidence="1">
    <location>
        <position position="81"/>
    </location>
    <ligand>
        <name>Mg(2+)</name>
        <dbReference type="ChEBI" id="CHEBI:18420"/>
    </ligand>
</feature>
<feature type="binding site" evidence="1">
    <location>
        <position position="122"/>
    </location>
    <ligand>
        <name>[2Fe-2S] cluster</name>
        <dbReference type="ChEBI" id="CHEBI:190135"/>
    </ligand>
</feature>
<feature type="binding site" evidence="1">
    <location>
        <position position="123"/>
    </location>
    <ligand>
        <name>Mg(2+)</name>
        <dbReference type="ChEBI" id="CHEBI:18420"/>
    </ligand>
</feature>
<feature type="binding site" description="via carbamate group" evidence="1">
    <location>
        <position position="124"/>
    </location>
    <ligand>
        <name>Mg(2+)</name>
        <dbReference type="ChEBI" id="CHEBI:18420"/>
    </ligand>
</feature>
<feature type="binding site" evidence="1">
    <location>
        <position position="193"/>
    </location>
    <ligand>
        <name>[2Fe-2S] cluster</name>
        <dbReference type="ChEBI" id="CHEBI:190135"/>
    </ligand>
</feature>
<feature type="binding site" evidence="1">
    <location>
        <position position="489"/>
    </location>
    <ligand>
        <name>Mg(2+)</name>
        <dbReference type="ChEBI" id="CHEBI:18420"/>
    </ligand>
</feature>
<feature type="modified residue" description="N6-carboxylysine" evidence="1">
    <location>
        <position position="124"/>
    </location>
</feature>
<gene>
    <name evidence="1" type="primary">ilvD</name>
    <name type="ordered locus">Avin_03310</name>
</gene>
<comment type="function">
    <text evidence="1">Functions in the biosynthesis of branched-chain amino acids. Catalyzes the dehydration of (2R,3R)-2,3-dihydroxy-3-methylpentanoate (2,3-dihydroxy-3-methylvalerate) into 2-oxo-3-methylpentanoate (2-oxo-3-methylvalerate) and of (2R)-2,3-dihydroxy-3-methylbutanoate (2,3-dihydroxyisovalerate) into 2-oxo-3-methylbutanoate (2-oxoisovalerate), the penultimate precursor to L-isoleucine and L-valine, respectively.</text>
</comment>
<comment type="catalytic activity">
    <reaction evidence="1">
        <text>(2R)-2,3-dihydroxy-3-methylbutanoate = 3-methyl-2-oxobutanoate + H2O</text>
        <dbReference type="Rhea" id="RHEA:24809"/>
        <dbReference type="ChEBI" id="CHEBI:11851"/>
        <dbReference type="ChEBI" id="CHEBI:15377"/>
        <dbReference type="ChEBI" id="CHEBI:49072"/>
        <dbReference type="EC" id="4.2.1.9"/>
    </reaction>
    <physiologicalReaction direction="left-to-right" evidence="1">
        <dbReference type="Rhea" id="RHEA:24810"/>
    </physiologicalReaction>
</comment>
<comment type="catalytic activity">
    <reaction evidence="1">
        <text>(2R,3R)-2,3-dihydroxy-3-methylpentanoate = (S)-3-methyl-2-oxopentanoate + H2O</text>
        <dbReference type="Rhea" id="RHEA:27694"/>
        <dbReference type="ChEBI" id="CHEBI:15377"/>
        <dbReference type="ChEBI" id="CHEBI:35146"/>
        <dbReference type="ChEBI" id="CHEBI:49258"/>
        <dbReference type="EC" id="4.2.1.9"/>
    </reaction>
    <physiologicalReaction direction="left-to-right" evidence="1">
        <dbReference type="Rhea" id="RHEA:27695"/>
    </physiologicalReaction>
</comment>
<comment type="cofactor">
    <cofactor evidence="1">
        <name>[2Fe-2S] cluster</name>
        <dbReference type="ChEBI" id="CHEBI:190135"/>
    </cofactor>
    <text evidence="1">Binds 1 [2Fe-2S] cluster per subunit. This cluster acts as a Lewis acid cofactor.</text>
</comment>
<comment type="cofactor">
    <cofactor evidence="1">
        <name>Mg(2+)</name>
        <dbReference type="ChEBI" id="CHEBI:18420"/>
    </cofactor>
</comment>
<comment type="pathway">
    <text evidence="1">Amino-acid biosynthesis; L-isoleucine biosynthesis; L-isoleucine from 2-oxobutanoate: step 3/4.</text>
</comment>
<comment type="pathway">
    <text evidence="1">Amino-acid biosynthesis; L-valine biosynthesis; L-valine from pyruvate: step 3/4.</text>
</comment>
<comment type="subunit">
    <text evidence="1">Homodimer.</text>
</comment>
<comment type="similarity">
    <text evidence="1">Belongs to the IlvD/Edd family.</text>
</comment>
<reference key="1">
    <citation type="journal article" date="2009" name="J. Bacteriol.">
        <title>Genome sequence of Azotobacter vinelandii, an obligate aerobe specialized to support diverse anaerobic metabolic processes.</title>
        <authorList>
            <person name="Setubal J.C."/>
            <person name="Dos Santos P."/>
            <person name="Goldman B.S."/>
            <person name="Ertesvaag H."/>
            <person name="Espin G."/>
            <person name="Rubio L.M."/>
            <person name="Valla S."/>
            <person name="Almeida N.F."/>
            <person name="Balasubramanian D."/>
            <person name="Cromes L."/>
            <person name="Curatti L."/>
            <person name="Du Z."/>
            <person name="Godsy E."/>
            <person name="Goodner B."/>
            <person name="Hellner-Burris K."/>
            <person name="Hernandez J.A."/>
            <person name="Houmiel K."/>
            <person name="Imperial J."/>
            <person name="Kennedy C."/>
            <person name="Larson T.J."/>
            <person name="Latreille P."/>
            <person name="Ligon L.S."/>
            <person name="Lu J."/>
            <person name="Maerk M."/>
            <person name="Miller N.M."/>
            <person name="Norton S."/>
            <person name="O'Carroll I.P."/>
            <person name="Paulsen I."/>
            <person name="Raulfs E.C."/>
            <person name="Roemer R."/>
            <person name="Rosser J."/>
            <person name="Segura D."/>
            <person name="Slater S."/>
            <person name="Stricklin S.L."/>
            <person name="Studholme D.J."/>
            <person name="Sun J."/>
            <person name="Viana C.J."/>
            <person name="Wallin E."/>
            <person name="Wang B."/>
            <person name="Wheeler C."/>
            <person name="Zhu H."/>
            <person name="Dean D.R."/>
            <person name="Dixon R."/>
            <person name="Wood D."/>
        </authorList>
    </citation>
    <scope>NUCLEOTIDE SEQUENCE [LARGE SCALE GENOMIC DNA]</scope>
    <source>
        <strain>DJ / ATCC BAA-1303</strain>
    </source>
</reference>
<evidence type="ECO:0000255" key="1">
    <source>
        <dbReference type="HAMAP-Rule" id="MF_00012"/>
    </source>
</evidence>
<organism>
    <name type="scientific">Azotobacter vinelandii (strain DJ / ATCC BAA-1303)</name>
    <dbReference type="NCBI Taxonomy" id="322710"/>
    <lineage>
        <taxon>Bacteria</taxon>
        <taxon>Pseudomonadati</taxon>
        <taxon>Pseudomonadota</taxon>
        <taxon>Gammaproteobacteria</taxon>
        <taxon>Pseudomonadales</taxon>
        <taxon>Pseudomonadaceae</taxon>
        <taxon>Azotobacter</taxon>
    </lineage>
</organism>
<keyword id="KW-0001">2Fe-2S</keyword>
<keyword id="KW-0028">Amino-acid biosynthesis</keyword>
<keyword id="KW-0100">Branched-chain amino acid biosynthesis</keyword>
<keyword id="KW-0408">Iron</keyword>
<keyword id="KW-0411">Iron-sulfur</keyword>
<keyword id="KW-0456">Lyase</keyword>
<keyword id="KW-0460">Magnesium</keyword>
<keyword id="KW-0479">Metal-binding</keyword>
<proteinExistence type="inferred from homology"/>
<protein>
    <recommendedName>
        <fullName evidence="1">Dihydroxy-acid dehydratase</fullName>
        <shortName evidence="1">DAD</shortName>
        <ecNumber evidence="1">4.2.1.9</ecNumber>
    </recommendedName>
</protein>
<sequence>MPDYRSKTSTFGRNMAGARALWRATGMKDEDFKKPIIAVANSFTQFVPGHVHLKDLGQLVAREIEKAGGVAKEFDTIAVDDGIAMGHDGMLYSLPSREIIADSVEYMVNAHCADALVCISNCDKITPGMLMASLRLNIPVVFVSGGPMEAGKTKLSQHGLDLVDAMVIAADSSASDEKVEAYERSACPTCGSCSGMFTANSMNCLTEALGLSLPGNGTIVATHADRRELFLQAGRTIVDLCRRYYQEGDESVLPRAIASRAAFENAMTLDIAMGGSTNTILHLLAAAQEAEVDFDLHAIDALSRQVPQLCKVAPNTPKYHIEDVHRAGGIVAILGELARAGLLNTEVATVHSKTLGEAIEKWDVRVNRDQAVHTFFKAGPAGIPSQEAFSQSERWDSLDLDRAEGCIRDLEHAFSTEGGLAVLYGNIALDGCVVKTAGVDESILVFEGTAKIFESQDAAVKGILGDEVKPGDVVVIRYEGPKGGPGMQEMLYPTSYLKSKGLGKQCALLTDGRFSGGTSGLSIGHASPEAAAGGAIGLVEDGDKILIDIPNRSINLLVSDEELKARRLHQDHKGWKPAAPRARKVSTALKAYALLATSADKGAVRNKALLDE</sequence>
<accession>C1DI94</accession>
<dbReference type="EC" id="4.2.1.9" evidence="1"/>
<dbReference type="EMBL" id="CP001157">
    <property type="protein sequence ID" value="ACO76591.1"/>
    <property type="molecule type" value="Genomic_DNA"/>
</dbReference>
<dbReference type="RefSeq" id="WP_012699019.1">
    <property type="nucleotide sequence ID" value="NC_012560.1"/>
</dbReference>
<dbReference type="SMR" id="C1DI94"/>
<dbReference type="STRING" id="322710.Avin_03310"/>
<dbReference type="EnsemblBacteria" id="ACO76591">
    <property type="protein sequence ID" value="ACO76591"/>
    <property type="gene ID" value="Avin_03310"/>
</dbReference>
<dbReference type="GeneID" id="88183782"/>
<dbReference type="KEGG" id="avn:Avin_03310"/>
<dbReference type="eggNOG" id="COG0129">
    <property type="taxonomic scope" value="Bacteria"/>
</dbReference>
<dbReference type="HOGENOM" id="CLU_014271_4_2_6"/>
<dbReference type="OrthoDB" id="9807077at2"/>
<dbReference type="UniPathway" id="UPA00047">
    <property type="reaction ID" value="UER00057"/>
</dbReference>
<dbReference type="UniPathway" id="UPA00049">
    <property type="reaction ID" value="UER00061"/>
</dbReference>
<dbReference type="Proteomes" id="UP000002424">
    <property type="component" value="Chromosome"/>
</dbReference>
<dbReference type="GO" id="GO:0005829">
    <property type="term" value="C:cytosol"/>
    <property type="evidence" value="ECO:0007669"/>
    <property type="project" value="TreeGrafter"/>
</dbReference>
<dbReference type="GO" id="GO:0051537">
    <property type="term" value="F:2 iron, 2 sulfur cluster binding"/>
    <property type="evidence" value="ECO:0007669"/>
    <property type="project" value="UniProtKB-UniRule"/>
</dbReference>
<dbReference type="GO" id="GO:0004160">
    <property type="term" value="F:dihydroxy-acid dehydratase activity"/>
    <property type="evidence" value="ECO:0007669"/>
    <property type="project" value="UniProtKB-UniRule"/>
</dbReference>
<dbReference type="GO" id="GO:0000287">
    <property type="term" value="F:magnesium ion binding"/>
    <property type="evidence" value="ECO:0007669"/>
    <property type="project" value="UniProtKB-UniRule"/>
</dbReference>
<dbReference type="GO" id="GO:0009097">
    <property type="term" value="P:isoleucine biosynthetic process"/>
    <property type="evidence" value="ECO:0007669"/>
    <property type="project" value="UniProtKB-UniRule"/>
</dbReference>
<dbReference type="GO" id="GO:0009099">
    <property type="term" value="P:L-valine biosynthetic process"/>
    <property type="evidence" value="ECO:0007669"/>
    <property type="project" value="UniProtKB-UniRule"/>
</dbReference>
<dbReference type="FunFam" id="3.50.30.80:FF:000001">
    <property type="entry name" value="Dihydroxy-acid dehydratase"/>
    <property type="match status" value="1"/>
</dbReference>
<dbReference type="Gene3D" id="3.50.30.80">
    <property type="entry name" value="IlvD/EDD C-terminal domain-like"/>
    <property type="match status" value="1"/>
</dbReference>
<dbReference type="HAMAP" id="MF_00012">
    <property type="entry name" value="IlvD"/>
    <property type="match status" value="1"/>
</dbReference>
<dbReference type="InterPro" id="IPR042096">
    <property type="entry name" value="Dihydro-acid_dehy_C"/>
</dbReference>
<dbReference type="InterPro" id="IPR004404">
    <property type="entry name" value="DihydroxyA_deHydtase"/>
</dbReference>
<dbReference type="InterPro" id="IPR020558">
    <property type="entry name" value="DiOHA_6PGluconate_deHydtase_CS"/>
</dbReference>
<dbReference type="InterPro" id="IPR056740">
    <property type="entry name" value="ILV_EDD_C"/>
</dbReference>
<dbReference type="InterPro" id="IPR000581">
    <property type="entry name" value="ILV_EDD_N"/>
</dbReference>
<dbReference type="InterPro" id="IPR037237">
    <property type="entry name" value="IlvD/EDD_N"/>
</dbReference>
<dbReference type="NCBIfam" id="TIGR00110">
    <property type="entry name" value="ilvD"/>
    <property type="match status" value="1"/>
</dbReference>
<dbReference type="NCBIfam" id="NF009103">
    <property type="entry name" value="PRK12448.1"/>
    <property type="match status" value="1"/>
</dbReference>
<dbReference type="PANTHER" id="PTHR43661">
    <property type="entry name" value="D-XYLONATE DEHYDRATASE"/>
    <property type="match status" value="1"/>
</dbReference>
<dbReference type="PANTHER" id="PTHR43661:SF3">
    <property type="entry name" value="D-XYLONATE DEHYDRATASE YAGF-RELATED"/>
    <property type="match status" value="1"/>
</dbReference>
<dbReference type="Pfam" id="PF24877">
    <property type="entry name" value="ILV_EDD_C"/>
    <property type="match status" value="1"/>
</dbReference>
<dbReference type="Pfam" id="PF00920">
    <property type="entry name" value="ILVD_EDD_N"/>
    <property type="match status" value="1"/>
</dbReference>
<dbReference type="SUPFAM" id="SSF143975">
    <property type="entry name" value="IlvD/EDD N-terminal domain-like"/>
    <property type="match status" value="1"/>
</dbReference>
<dbReference type="SUPFAM" id="SSF52016">
    <property type="entry name" value="LeuD/IlvD-like"/>
    <property type="match status" value="1"/>
</dbReference>
<dbReference type="PROSITE" id="PS00886">
    <property type="entry name" value="ILVD_EDD_1"/>
    <property type="match status" value="1"/>
</dbReference>
<dbReference type="PROSITE" id="PS00887">
    <property type="entry name" value="ILVD_EDD_2"/>
    <property type="match status" value="1"/>
</dbReference>
<name>ILVD_AZOVD</name>